<proteinExistence type="inferred from homology"/>
<reference key="1">
    <citation type="journal article" date="2003" name="Bioinformatics">
        <title>Annotation pattern of ESTs from Spodoptera frugiperda Sf9 cells and analysis of the ribosomal protein genes reveal insect-specific features and unexpectedly low codon usage bias.</title>
        <authorList>
            <person name="Landais I."/>
            <person name="Ogliastro M."/>
            <person name="Mita K."/>
            <person name="Nohata J."/>
            <person name="Lopez-Ferber M."/>
            <person name="Duonor-Cerutti M."/>
            <person name="Shimada T."/>
            <person name="Fournier P."/>
            <person name="Devauchelle G."/>
        </authorList>
    </citation>
    <scope>NUCLEOTIDE SEQUENCE [LARGE SCALE MRNA]</scope>
</reference>
<gene>
    <name type="primary">RpL38</name>
</gene>
<dbReference type="EMBL" id="AF400201">
    <property type="protein sequence ID" value="AAK92173.1"/>
    <property type="molecule type" value="mRNA"/>
</dbReference>
<dbReference type="SMR" id="Q962S5"/>
<dbReference type="OrthoDB" id="10250488at2759"/>
<dbReference type="Proteomes" id="UP000829999">
    <property type="component" value="Unplaced"/>
</dbReference>
<dbReference type="GO" id="GO:0022625">
    <property type="term" value="C:cytosolic large ribosomal subunit"/>
    <property type="evidence" value="ECO:0007669"/>
    <property type="project" value="TreeGrafter"/>
</dbReference>
<dbReference type="GO" id="GO:0003735">
    <property type="term" value="F:structural constituent of ribosome"/>
    <property type="evidence" value="ECO:0007669"/>
    <property type="project" value="InterPro"/>
</dbReference>
<dbReference type="GO" id="GO:0022618">
    <property type="term" value="P:protein-RNA complex assembly"/>
    <property type="evidence" value="ECO:0007669"/>
    <property type="project" value="TreeGrafter"/>
</dbReference>
<dbReference type="GO" id="GO:0006412">
    <property type="term" value="P:translation"/>
    <property type="evidence" value="ECO:0007669"/>
    <property type="project" value="InterPro"/>
</dbReference>
<dbReference type="FunFam" id="3.30.720.90:FF:000001">
    <property type="entry name" value="60S ribosomal protein L38"/>
    <property type="match status" value="1"/>
</dbReference>
<dbReference type="Gene3D" id="3.30.720.90">
    <property type="match status" value="1"/>
</dbReference>
<dbReference type="InterPro" id="IPR002675">
    <property type="entry name" value="Ribosomal_eL38"/>
</dbReference>
<dbReference type="InterPro" id="IPR038464">
    <property type="entry name" value="Ribosomal_eL38_sf"/>
</dbReference>
<dbReference type="PANTHER" id="PTHR10965">
    <property type="entry name" value="60S RIBOSOMAL PROTEIN L38"/>
    <property type="match status" value="1"/>
</dbReference>
<dbReference type="PANTHER" id="PTHR10965:SF0">
    <property type="entry name" value="LARGE RIBOSOMAL SUBUNIT PROTEIN EL38"/>
    <property type="match status" value="1"/>
</dbReference>
<dbReference type="Pfam" id="PF01781">
    <property type="entry name" value="Ribosomal_L38e"/>
    <property type="match status" value="1"/>
</dbReference>
<keyword id="KW-0687">Ribonucleoprotein</keyword>
<keyword id="KW-0689">Ribosomal protein</keyword>
<sequence length="70" mass="8271">MPREIKDIKDFLLKARRKDAKSVKIKKNQQNVKFKVRCSRFLYTLVITDKEKAEKLKQSLPPGLQVKEVK</sequence>
<protein>
    <recommendedName>
        <fullName evidence="1">Large ribosomal subunit protein eL38</fullName>
    </recommendedName>
    <alternativeName>
        <fullName>60S ribosomal protein L38</fullName>
    </alternativeName>
</protein>
<name>RL38_SPOFR</name>
<feature type="chain" id="PRO_0000319566" description="Large ribosomal subunit protein eL38">
    <location>
        <begin position="1"/>
        <end position="70"/>
    </location>
</feature>
<organism>
    <name type="scientific">Spodoptera frugiperda</name>
    <name type="common">Fall armyworm</name>
    <dbReference type="NCBI Taxonomy" id="7108"/>
    <lineage>
        <taxon>Eukaryota</taxon>
        <taxon>Metazoa</taxon>
        <taxon>Ecdysozoa</taxon>
        <taxon>Arthropoda</taxon>
        <taxon>Hexapoda</taxon>
        <taxon>Insecta</taxon>
        <taxon>Pterygota</taxon>
        <taxon>Neoptera</taxon>
        <taxon>Endopterygota</taxon>
        <taxon>Lepidoptera</taxon>
        <taxon>Glossata</taxon>
        <taxon>Ditrysia</taxon>
        <taxon>Noctuoidea</taxon>
        <taxon>Noctuidae</taxon>
        <taxon>Amphipyrinae</taxon>
        <taxon>Spodoptera</taxon>
    </lineage>
</organism>
<comment type="similarity">
    <text evidence="1">Belongs to the eukaryotic ribosomal protein eL38 family.</text>
</comment>
<accession>Q962S5</accession>
<evidence type="ECO:0000305" key="1"/>